<organism>
    <name type="scientific">Mycobacterium tuberculosis (strain ATCC 25618 / H37Rv)</name>
    <dbReference type="NCBI Taxonomy" id="83332"/>
    <lineage>
        <taxon>Bacteria</taxon>
        <taxon>Bacillati</taxon>
        <taxon>Actinomycetota</taxon>
        <taxon>Actinomycetes</taxon>
        <taxon>Mycobacteriales</taxon>
        <taxon>Mycobacteriaceae</taxon>
        <taxon>Mycobacterium</taxon>
        <taxon>Mycobacterium tuberculosis complex</taxon>
    </lineage>
</organism>
<gene>
    <name type="primary">korB</name>
    <name type="ordered locus">Rv2454c</name>
</gene>
<protein>
    <recommendedName>
        <fullName>2-oxoglutarate oxidoreductase subunit KorB</fullName>
        <ecNumber evidence="2">1.2.7.3</ecNumber>
    </recommendedName>
    <alternativeName>
        <fullName>Alpha-ketoglutarate oxidoreductase subunit beta</fullName>
        <shortName>KG oxidoreductase subunit beta</shortName>
        <shortName>KGO subunit beta</shortName>
        <shortName>KOR subunit beta</shortName>
    </alternativeName>
</protein>
<accession>O53181</accession>
<accession>F2GHL5</accession>
<accession>L0TCK6</accession>
<comment type="function">
    <text evidence="2">Component of KG oxidoreductase (KOR) that catalyzes the CoA-dependent oxidative decarboxylation of 2-oxoglutarate (alpha-ketoglutarate, KG) to succinyl-CoA. Methyl viologen can act as electron acceptor in vitro; the physiologic electron acceptor is unknown. Is involved in the alternative TCA pathway that functions concurrently with fatty acid beta-oxidation. Since a growing body of evidence indicates that lipids (for example cholesterol and fatty acids) are a predominant growth substrate for M.tuberculosis during infection, flux through KOR likely represents an important step in intermediary metabolism in vivo. KOR-dependent decarboxylation of KG also appears to be an important source of CO(2) in M.tuberculosis metabolism.</text>
</comment>
<comment type="catalytic activity">
    <reaction evidence="2">
        <text>2 oxidized [2Fe-2S]-[ferredoxin] + 2-oxoglutarate + CoA = succinyl-CoA + 2 reduced [2Fe-2S]-[ferredoxin] + CO2 + H(+)</text>
        <dbReference type="Rhea" id="RHEA:17297"/>
        <dbReference type="Rhea" id="RHEA-COMP:10000"/>
        <dbReference type="Rhea" id="RHEA-COMP:10001"/>
        <dbReference type="ChEBI" id="CHEBI:15378"/>
        <dbReference type="ChEBI" id="CHEBI:16526"/>
        <dbReference type="ChEBI" id="CHEBI:16810"/>
        <dbReference type="ChEBI" id="CHEBI:33737"/>
        <dbReference type="ChEBI" id="CHEBI:33738"/>
        <dbReference type="ChEBI" id="CHEBI:57287"/>
        <dbReference type="ChEBI" id="CHEBI:57292"/>
        <dbReference type="EC" id="1.2.7.3"/>
    </reaction>
</comment>
<comment type="cofactor">
    <cofactor evidence="2">
        <name>Mg(2+)</name>
        <dbReference type="ChEBI" id="CHEBI:18420"/>
    </cofactor>
</comment>
<comment type="pathway">
    <text evidence="2">Carbohydrate metabolism; tricarboxylic acid cycle.</text>
</comment>
<comment type="subunit">
    <text evidence="2">KG oxidoreductase (KOR) is composed of KorA and KorB subunits.</text>
</comment>
<comment type="disruption phenotype">
    <text evidence="2">CoA-dependent KG oxidoreductase activity is absent in a mutant strain deleted for both genes korA and korB, and this strain is impaired for aerobic growth in the absence of sufficient amounts of CO(2). Inhibition of the glyoxylate shunt or exclusion of exogenous fatty acids alleviates this growth defect. Simultaneous disruption of korAB and kgd results in strict dependence upon the glyoxylate shunt for growth.</text>
</comment>
<comment type="miscellaneous">
    <text>Is extremely stable under aerobic conditions.</text>
</comment>
<feature type="chain" id="PRO_0000420517" description="2-oxoglutarate oxidoreductase subunit KorB">
    <location>
        <begin position="1"/>
        <end position="373"/>
    </location>
</feature>
<feature type="region of interest" description="Disordered" evidence="1">
    <location>
        <begin position="26"/>
        <end position="50"/>
    </location>
</feature>
<feature type="compositionally biased region" description="Polar residues" evidence="1">
    <location>
        <begin position="27"/>
        <end position="41"/>
    </location>
</feature>
<keyword id="KW-0460">Magnesium</keyword>
<keyword id="KW-0560">Oxidoreductase</keyword>
<keyword id="KW-1185">Reference proteome</keyword>
<keyword id="KW-0816">Tricarboxylic acid cycle</keyword>
<dbReference type="EC" id="1.2.7.3" evidence="2"/>
<dbReference type="EMBL" id="AL123456">
    <property type="protein sequence ID" value="CCP45247.1"/>
    <property type="molecule type" value="Genomic_DNA"/>
</dbReference>
<dbReference type="PIR" id="E70864">
    <property type="entry name" value="E70864"/>
</dbReference>
<dbReference type="RefSeq" id="NP_216970.1">
    <property type="nucleotide sequence ID" value="NC_000962.3"/>
</dbReference>
<dbReference type="RefSeq" id="WP_003412624.1">
    <property type="nucleotide sequence ID" value="NZ_NVQJ01000024.1"/>
</dbReference>
<dbReference type="SMR" id="O53181"/>
<dbReference type="FunCoup" id="O53181">
    <property type="interactions" value="125"/>
</dbReference>
<dbReference type="STRING" id="83332.Rv2454c"/>
<dbReference type="PaxDb" id="83332-Rv2454c"/>
<dbReference type="DNASU" id="887435"/>
<dbReference type="GeneID" id="887435"/>
<dbReference type="KEGG" id="mtu:Rv2454c"/>
<dbReference type="KEGG" id="mtv:RVBD_2454c"/>
<dbReference type="PATRIC" id="fig|83332.111.peg.2747"/>
<dbReference type="TubercuList" id="Rv2454c"/>
<dbReference type="eggNOG" id="COG1013">
    <property type="taxonomic scope" value="Bacteria"/>
</dbReference>
<dbReference type="InParanoid" id="O53181"/>
<dbReference type="OrthoDB" id="9775140at2"/>
<dbReference type="PhylomeDB" id="O53181"/>
<dbReference type="BioCyc" id="MetaCyc:G185E-6686-MONOMER"/>
<dbReference type="UniPathway" id="UPA00223"/>
<dbReference type="Proteomes" id="UP000001584">
    <property type="component" value="Chromosome"/>
</dbReference>
<dbReference type="GO" id="GO:0005829">
    <property type="term" value="C:cytosol"/>
    <property type="evidence" value="ECO:0007005"/>
    <property type="project" value="MTBBASE"/>
</dbReference>
<dbReference type="GO" id="GO:0009274">
    <property type="term" value="C:peptidoglycan-based cell wall"/>
    <property type="evidence" value="ECO:0007005"/>
    <property type="project" value="MTBBASE"/>
</dbReference>
<dbReference type="GO" id="GO:0047553">
    <property type="term" value="F:2-oxoglutarate synthase activity"/>
    <property type="evidence" value="ECO:0000314"/>
    <property type="project" value="MTBBASE"/>
</dbReference>
<dbReference type="GO" id="GO:0000287">
    <property type="term" value="F:magnesium ion binding"/>
    <property type="evidence" value="ECO:0000314"/>
    <property type="project" value="MTBBASE"/>
</dbReference>
<dbReference type="GO" id="GO:0016491">
    <property type="term" value="F:oxidoreductase activity"/>
    <property type="evidence" value="ECO:0000318"/>
    <property type="project" value="GO_Central"/>
</dbReference>
<dbReference type="GO" id="GO:0030976">
    <property type="term" value="F:thiamine pyrophosphate binding"/>
    <property type="evidence" value="ECO:0007669"/>
    <property type="project" value="InterPro"/>
</dbReference>
<dbReference type="GO" id="GO:0006099">
    <property type="term" value="P:tricarboxylic acid cycle"/>
    <property type="evidence" value="ECO:0000314"/>
    <property type="project" value="MTBBASE"/>
</dbReference>
<dbReference type="CDD" id="cd03375">
    <property type="entry name" value="TPP_OGFOR"/>
    <property type="match status" value="1"/>
</dbReference>
<dbReference type="FunFam" id="3.40.50.970:FF:000037">
    <property type="entry name" value="2-oxoacid:ferredoxin oxidoreductase subunit beta"/>
    <property type="match status" value="1"/>
</dbReference>
<dbReference type="Gene3D" id="3.40.50.970">
    <property type="match status" value="1"/>
</dbReference>
<dbReference type="InterPro" id="IPR051457">
    <property type="entry name" value="2-oxoacid:Fd_oxidoreductase"/>
</dbReference>
<dbReference type="InterPro" id="IPR029061">
    <property type="entry name" value="THDP-binding"/>
</dbReference>
<dbReference type="InterPro" id="IPR011766">
    <property type="entry name" value="TPP_enzyme_TPP-bd"/>
</dbReference>
<dbReference type="PANTHER" id="PTHR48084:SF4">
    <property type="entry name" value="2-OXOGLUTARATE OXIDOREDUCTASE SUBUNIT KORB"/>
    <property type="match status" value="1"/>
</dbReference>
<dbReference type="PANTHER" id="PTHR48084">
    <property type="entry name" value="2-OXOGLUTARATE OXIDOREDUCTASE SUBUNIT KORB-RELATED"/>
    <property type="match status" value="1"/>
</dbReference>
<dbReference type="Pfam" id="PF02775">
    <property type="entry name" value="TPP_enzyme_C"/>
    <property type="match status" value="1"/>
</dbReference>
<dbReference type="SUPFAM" id="SSF52518">
    <property type="entry name" value="Thiamin diphosphate-binding fold (THDP-binding)"/>
    <property type="match status" value="1"/>
</dbReference>
<sequence>MTRSGDEAQLMTGVTGDLAGTELGLTPSLTKNAGVPTTDQPQKGKDFTSDQEVRWCPGCGDYVILNTIRNFLPELGLRRENIVFISGIGCSSRFPYYLETYGFHSIHGRAPAIATGLALAREDLSVWVVTGDGDALSIGGNHLIHALRRNINVTILLFNNRIYGLTKGQYSPTSEVGKVTKSTPMGSLDHPFNPVSLALGAEATFVGRALDSDRNGLTEVLRAAAQHRGAALVEILQDCPIFNDGSFDALRKEGAEERVIKVRHGEPIVFGANGEYCVVKSGFGLEVAKTADVAIDEIIVHDAQVDDPAYAFALSRLSDQNLDHTVLGIFRHISRPTYDDAARSQVVAARNAAPSGTAALQSLLHGRDTWTVD</sequence>
<proteinExistence type="evidence at protein level"/>
<reference key="1">
    <citation type="journal article" date="1998" name="Nature">
        <title>Deciphering the biology of Mycobacterium tuberculosis from the complete genome sequence.</title>
        <authorList>
            <person name="Cole S.T."/>
            <person name="Brosch R."/>
            <person name="Parkhill J."/>
            <person name="Garnier T."/>
            <person name="Churcher C.M."/>
            <person name="Harris D.E."/>
            <person name="Gordon S.V."/>
            <person name="Eiglmeier K."/>
            <person name="Gas S."/>
            <person name="Barry C.E. III"/>
            <person name="Tekaia F."/>
            <person name="Badcock K."/>
            <person name="Basham D."/>
            <person name="Brown D."/>
            <person name="Chillingworth T."/>
            <person name="Connor R."/>
            <person name="Davies R.M."/>
            <person name="Devlin K."/>
            <person name="Feltwell T."/>
            <person name="Gentles S."/>
            <person name="Hamlin N."/>
            <person name="Holroyd S."/>
            <person name="Hornsby T."/>
            <person name="Jagels K."/>
            <person name="Krogh A."/>
            <person name="McLean J."/>
            <person name="Moule S."/>
            <person name="Murphy L.D."/>
            <person name="Oliver S."/>
            <person name="Osborne J."/>
            <person name="Quail M.A."/>
            <person name="Rajandream M.A."/>
            <person name="Rogers J."/>
            <person name="Rutter S."/>
            <person name="Seeger K."/>
            <person name="Skelton S."/>
            <person name="Squares S."/>
            <person name="Squares R."/>
            <person name="Sulston J.E."/>
            <person name="Taylor K."/>
            <person name="Whitehead S."/>
            <person name="Barrell B.G."/>
        </authorList>
    </citation>
    <scope>NUCLEOTIDE SEQUENCE [LARGE SCALE GENOMIC DNA]</scope>
    <source>
        <strain>ATCC 25618 / H37Rv</strain>
    </source>
</reference>
<reference key="2">
    <citation type="journal article" date="2009" name="PLoS Pathog.">
        <title>An anaerobic-type alpha-ketoglutarate ferredoxin oxidoreductase completes the oxidative tricarboxylic acid cycle of Mycobacterium tuberculosis.</title>
        <authorList>
            <person name="Baughn A.D."/>
            <person name="Garforth S.J."/>
            <person name="Vilcheze C."/>
            <person name="Jacobs W.R. Jr."/>
        </authorList>
    </citation>
    <scope>FUNCTION</scope>
    <scope>CATALYTIC ACTIVITY</scope>
    <scope>COFACTOR</scope>
    <scope>PATHWAY</scope>
    <scope>ROLE IN TCA CYCLE</scope>
    <scope>GENE NAME</scope>
    <scope>SUBUNIT</scope>
    <scope>DISRUPTION PHENOTYPE</scope>
    <source>
        <strain>ATCC 25618 / H37Rv</strain>
    </source>
</reference>
<reference key="3">
    <citation type="journal article" date="2011" name="Mol. Cell. Proteomics">
        <title>Proteogenomic analysis of Mycobacterium tuberculosis by high resolution mass spectrometry.</title>
        <authorList>
            <person name="Kelkar D.S."/>
            <person name="Kumar D."/>
            <person name="Kumar P."/>
            <person name="Balakrishnan L."/>
            <person name="Muthusamy B."/>
            <person name="Yadav A.K."/>
            <person name="Shrivastava P."/>
            <person name="Marimuthu A."/>
            <person name="Anand S."/>
            <person name="Sundaram H."/>
            <person name="Kingsbury R."/>
            <person name="Harsha H.C."/>
            <person name="Nair B."/>
            <person name="Prasad T.S."/>
            <person name="Chauhan D.S."/>
            <person name="Katoch K."/>
            <person name="Katoch V.M."/>
            <person name="Kumar P."/>
            <person name="Chaerkady R."/>
            <person name="Ramachandran S."/>
            <person name="Dash D."/>
            <person name="Pandey A."/>
        </authorList>
    </citation>
    <scope>IDENTIFICATION BY MASS SPECTROMETRY [LARGE SCALE ANALYSIS]</scope>
    <source>
        <strain>ATCC 25618 / H37Rv</strain>
    </source>
</reference>
<name>KORB_MYCTU</name>
<evidence type="ECO:0000256" key="1">
    <source>
        <dbReference type="SAM" id="MobiDB-lite"/>
    </source>
</evidence>
<evidence type="ECO:0000269" key="2">
    <source>
    </source>
</evidence>